<comment type="function">
    <text evidence="1">Part of a potassium transport system.</text>
</comment>
<comment type="domain">
    <text evidence="1">The RCK N-terminal domain binds NAD and possibly other effectors. This is expected to cause a conformation change that regulates potassium transport (By similarity).</text>
</comment>
<comment type="sequence caution" evidence="5">
    <conflict type="erroneous initiation">
        <sequence resource="EMBL-CDS" id="AAM32197"/>
    </conflict>
</comment>
<reference key="1">
    <citation type="journal article" date="2002" name="J. Mol. Microbiol. Biotechnol.">
        <title>The genome of Methanosarcina mazei: evidence for lateral gene transfer between Bacteria and Archaea.</title>
        <authorList>
            <person name="Deppenmeier U."/>
            <person name="Johann A."/>
            <person name="Hartsch T."/>
            <person name="Merkl R."/>
            <person name="Schmitz R.A."/>
            <person name="Martinez-Arias R."/>
            <person name="Henne A."/>
            <person name="Wiezer A."/>
            <person name="Baeumer S."/>
            <person name="Jacobi C."/>
            <person name="Brueggemann H."/>
            <person name="Lienard T."/>
            <person name="Christmann A."/>
            <person name="Boemecke M."/>
            <person name="Steckel S."/>
            <person name="Bhattacharyya A."/>
            <person name="Lykidis A."/>
            <person name="Overbeek R."/>
            <person name="Klenk H.-P."/>
            <person name="Gunsalus R.P."/>
            <person name="Fritz H.-J."/>
            <person name="Gottschalk G."/>
        </authorList>
    </citation>
    <scope>NUCLEOTIDE SEQUENCE [LARGE SCALE GENOMIC DNA]</scope>
    <source>
        <strain>ATCC BAA-159 / DSM 3647 / Goe1 / Go1 / JCM 11833 / OCM 88</strain>
    </source>
</reference>
<keyword id="KW-0406">Ion transport</keyword>
<keyword id="KW-0520">NAD</keyword>
<keyword id="KW-0630">Potassium</keyword>
<keyword id="KW-0633">Potassium transport</keyword>
<keyword id="KW-0677">Repeat</keyword>
<keyword id="KW-0813">Transport</keyword>
<gene>
    <name type="primary">trkA2</name>
    <name type="synonym">trkA</name>
    <name type="ordered locus">MM_2501</name>
</gene>
<sequence length="448" mass="48910">MKAVVIGAGEVGYHIAKFLSLTHDVIVIENDEDALRRADELDVQVVEGNGANADILASVLPDVDILVAVTGVDEVNIVACMTAKLILRAHPGWKETKTIARVSNPDYIDVPVTSRAQVGVDIMICPELALASEVAEVLSNPSAIDAEMFAGGKVQMMEFAIRPDNRLVGKRMQDIELEDCCIVSAIFRNNDIIIPHGDDFIKANDHMVVVGKPRAMADLENVFGNEGPHRNRILLIGCGIVGFYLAKIIDKDENADLKVIEYRKSRCIEVAEMLENALILNGDGTDVNLLREENIEDMDVVIAVTDNDEKNLLCSLLAKQMGAKKVIARADRSDYVPLFEMVGIDIAVSPREATVNEVLKLTMGKGIEALATIEGEKAEIIEYTASGQSKIVGKPLSKIKFPKGAIVTMVVHDDDVIIPRGEFIIREGDRVIIFALSSAVRSVEKLFK</sequence>
<feature type="chain" id="PRO_0000148724" description="Trk system potassium uptake protein TrkA homolog 2">
    <location>
        <begin position="1"/>
        <end position="448"/>
    </location>
</feature>
<feature type="domain" description="RCK N-terminal 1" evidence="3">
    <location>
        <begin position="1"/>
        <end position="124"/>
    </location>
</feature>
<feature type="domain" description="RCK C-terminal 1" evidence="4">
    <location>
        <begin position="144"/>
        <end position="225"/>
    </location>
</feature>
<feature type="domain" description="RCK N-terminal 2" evidence="3">
    <location>
        <begin position="230"/>
        <end position="348"/>
    </location>
</feature>
<feature type="domain" description="RCK C-terminal 2" evidence="4">
    <location>
        <begin position="368"/>
        <end position="448"/>
    </location>
</feature>
<feature type="binding site" description="in other chain" evidence="1">
    <location>
        <begin position="7"/>
        <end position="11"/>
    </location>
    <ligand>
        <name>NAD(+)</name>
        <dbReference type="ChEBI" id="CHEBI:57540"/>
        <label>1</label>
        <note>ligand shared between dimeric partners</note>
    </ligand>
</feature>
<feature type="binding site" description="in other chain" evidence="1">
    <location>
        <position position="29"/>
    </location>
    <ligand>
        <name>NAD(+)</name>
        <dbReference type="ChEBI" id="CHEBI:57540"/>
        <label>1</label>
        <note>ligand shared between dimeric partners</note>
    </ligand>
</feature>
<feature type="binding site" description="in other chain" evidence="1">
    <location>
        <begin position="70"/>
        <end position="71"/>
    </location>
    <ligand>
        <name>NAD(+)</name>
        <dbReference type="ChEBI" id="CHEBI:57540"/>
        <label>1</label>
        <note>ligand shared between dimeric partners</note>
    </ligand>
</feature>
<feature type="binding site" evidence="1">
    <location>
        <position position="101"/>
    </location>
    <ligand>
        <name>NAD(+)</name>
        <dbReference type="ChEBI" id="CHEBI:57540"/>
        <label>1</label>
        <note>ligand shared between dimeric partners</note>
    </ligand>
</feature>
<feature type="binding site" evidence="2">
    <location>
        <begin position="232"/>
        <end position="262"/>
    </location>
    <ligand>
        <name>NAD(+)</name>
        <dbReference type="ChEBI" id="CHEBI:57540"/>
        <label>2</label>
    </ligand>
</feature>
<proteinExistence type="inferred from homology"/>
<dbReference type="EMBL" id="AE008384">
    <property type="protein sequence ID" value="AAM32197.1"/>
    <property type="status" value="ALT_INIT"/>
    <property type="molecule type" value="Genomic_DNA"/>
</dbReference>
<dbReference type="RefSeq" id="WP_015412586.1">
    <property type="nucleotide sequence ID" value="NC_003901.1"/>
</dbReference>
<dbReference type="SMR" id="P58936"/>
<dbReference type="GeneID" id="66135463"/>
<dbReference type="KEGG" id="mma:MM_2501"/>
<dbReference type="PATRIC" id="fig|192952.21.peg.2863"/>
<dbReference type="eggNOG" id="arCOG01959">
    <property type="taxonomic scope" value="Archaea"/>
</dbReference>
<dbReference type="HOGENOM" id="CLU_046525_0_0_2"/>
<dbReference type="Proteomes" id="UP000000595">
    <property type="component" value="Chromosome"/>
</dbReference>
<dbReference type="GO" id="GO:0005886">
    <property type="term" value="C:plasma membrane"/>
    <property type="evidence" value="ECO:0007669"/>
    <property type="project" value="InterPro"/>
</dbReference>
<dbReference type="GO" id="GO:0015079">
    <property type="term" value="F:potassium ion transmembrane transporter activity"/>
    <property type="evidence" value="ECO:0007669"/>
    <property type="project" value="InterPro"/>
</dbReference>
<dbReference type="Gene3D" id="3.40.50.720">
    <property type="entry name" value="NAD(P)-binding Rossmann-like Domain"/>
    <property type="match status" value="2"/>
</dbReference>
<dbReference type="Gene3D" id="3.30.70.1450">
    <property type="entry name" value="Regulator of K+ conductance, C-terminal domain"/>
    <property type="match status" value="2"/>
</dbReference>
<dbReference type="InterPro" id="IPR006036">
    <property type="entry name" value="K_uptake_TrkA"/>
</dbReference>
<dbReference type="InterPro" id="IPR036291">
    <property type="entry name" value="NAD(P)-bd_dom_sf"/>
</dbReference>
<dbReference type="InterPro" id="IPR006037">
    <property type="entry name" value="RCK_C"/>
</dbReference>
<dbReference type="InterPro" id="IPR036721">
    <property type="entry name" value="RCK_C_sf"/>
</dbReference>
<dbReference type="InterPro" id="IPR003148">
    <property type="entry name" value="RCK_N"/>
</dbReference>
<dbReference type="InterPro" id="IPR050721">
    <property type="entry name" value="Trk_Ktr_HKT_K-transport"/>
</dbReference>
<dbReference type="NCBIfam" id="NF007031">
    <property type="entry name" value="PRK09496.1-2"/>
    <property type="match status" value="1"/>
</dbReference>
<dbReference type="NCBIfam" id="NF007032">
    <property type="entry name" value="PRK09496.1-4"/>
    <property type="match status" value="1"/>
</dbReference>
<dbReference type="NCBIfam" id="NF007034">
    <property type="entry name" value="PRK09496.2-1"/>
    <property type="match status" value="1"/>
</dbReference>
<dbReference type="NCBIfam" id="NF007036">
    <property type="entry name" value="PRK09496.2-3"/>
    <property type="match status" value="1"/>
</dbReference>
<dbReference type="NCBIfam" id="NF007039">
    <property type="entry name" value="PRK09496.3-2"/>
    <property type="match status" value="1"/>
</dbReference>
<dbReference type="NCBIfam" id="NF007041">
    <property type="entry name" value="PRK09496.3-4"/>
    <property type="match status" value="1"/>
</dbReference>
<dbReference type="PANTHER" id="PTHR43833">
    <property type="entry name" value="POTASSIUM CHANNEL PROTEIN 2-RELATED-RELATED"/>
    <property type="match status" value="1"/>
</dbReference>
<dbReference type="PANTHER" id="PTHR43833:SF5">
    <property type="entry name" value="TRK SYSTEM POTASSIUM UPTAKE PROTEIN TRKA"/>
    <property type="match status" value="1"/>
</dbReference>
<dbReference type="Pfam" id="PF02080">
    <property type="entry name" value="TrkA_C"/>
    <property type="match status" value="2"/>
</dbReference>
<dbReference type="Pfam" id="PF02254">
    <property type="entry name" value="TrkA_N"/>
    <property type="match status" value="2"/>
</dbReference>
<dbReference type="PRINTS" id="PR00335">
    <property type="entry name" value="KUPTAKETRKA"/>
</dbReference>
<dbReference type="SUPFAM" id="SSF51735">
    <property type="entry name" value="NAD(P)-binding Rossmann-fold domains"/>
    <property type="match status" value="2"/>
</dbReference>
<dbReference type="SUPFAM" id="SSF116726">
    <property type="entry name" value="TrkA C-terminal domain-like"/>
    <property type="match status" value="2"/>
</dbReference>
<dbReference type="PROSITE" id="PS51202">
    <property type="entry name" value="RCK_C"/>
    <property type="match status" value="2"/>
</dbReference>
<dbReference type="PROSITE" id="PS51201">
    <property type="entry name" value="RCK_N"/>
    <property type="match status" value="2"/>
</dbReference>
<organism>
    <name type="scientific">Methanosarcina mazei (strain ATCC BAA-159 / DSM 3647 / Goe1 / Go1 / JCM 11833 / OCM 88)</name>
    <name type="common">Methanosarcina frisia</name>
    <dbReference type="NCBI Taxonomy" id="192952"/>
    <lineage>
        <taxon>Archaea</taxon>
        <taxon>Methanobacteriati</taxon>
        <taxon>Methanobacteriota</taxon>
        <taxon>Stenosarchaea group</taxon>
        <taxon>Methanomicrobia</taxon>
        <taxon>Methanosarcinales</taxon>
        <taxon>Methanosarcinaceae</taxon>
        <taxon>Methanosarcina</taxon>
    </lineage>
</organism>
<name>TRKA2_METMA</name>
<protein>
    <recommendedName>
        <fullName>Trk system potassium uptake protein TrkA homolog 2</fullName>
        <shortName>K(+)-uptake protein TrkA homolog 2</shortName>
    </recommendedName>
</protein>
<evidence type="ECO:0000250" key="1"/>
<evidence type="ECO:0000255" key="2"/>
<evidence type="ECO:0000255" key="3">
    <source>
        <dbReference type="PROSITE-ProRule" id="PRU00543"/>
    </source>
</evidence>
<evidence type="ECO:0000255" key="4">
    <source>
        <dbReference type="PROSITE-ProRule" id="PRU00544"/>
    </source>
</evidence>
<evidence type="ECO:0000305" key="5"/>
<accession>P58936</accession>